<feature type="chain" id="PRO_0000116906" description="Adenosylhomocysteinase A">
    <location>
        <begin position="1"/>
        <end position="433"/>
    </location>
</feature>
<feature type="region of interest" description="NAD binding" evidence="1">
    <location>
        <begin position="184"/>
        <end position="351"/>
    </location>
</feature>
<feature type="binding site" evidence="1">
    <location>
        <position position="57"/>
    </location>
    <ligand>
        <name>substrate</name>
    </ligand>
</feature>
<feature type="binding site" evidence="1">
    <location>
        <position position="132"/>
    </location>
    <ligand>
        <name>substrate</name>
    </ligand>
</feature>
<feature type="binding site" evidence="1">
    <location>
        <position position="157"/>
    </location>
    <ligand>
        <name>substrate</name>
    </ligand>
</feature>
<feature type="binding site" evidence="1">
    <location>
        <position position="187"/>
    </location>
    <ligand>
        <name>substrate</name>
    </ligand>
</feature>
<feature type="binding site" evidence="1">
    <location>
        <position position="191"/>
    </location>
    <ligand>
        <name>substrate</name>
    </ligand>
</feature>
<name>SAHHA_XENLA</name>
<reference key="1">
    <citation type="journal article" date="1994" name="Biochem. Biophys. Res. Commun.">
        <title>S-adenosyl-L-homocysteine hydrolase from Xenopus laevis -- identification, developmental expression and evolution.</title>
        <authorList>
            <person name="Seery L.T."/>
            <person name="McCabe B.D."/>
            <person name="Schoenberg D.R."/>
            <person name="Whitehead A.S."/>
        </authorList>
    </citation>
    <scope>NUCLEOTIDE SEQUENCE [MRNA]</scope>
    <source>
        <tissue>Liver</tissue>
    </source>
</reference>
<reference key="2">
    <citation type="submission" date="2004-06" db="EMBL/GenBank/DDBJ databases">
        <authorList>
            <consortium name="NIH - Xenopus Gene Collection (XGC) project"/>
        </authorList>
    </citation>
    <scope>NUCLEOTIDE SEQUENCE [LARGE SCALE MRNA]</scope>
    <source>
        <tissue>Embryo</tissue>
    </source>
</reference>
<evidence type="ECO:0000250" key="1">
    <source>
        <dbReference type="UniProtKB" id="P10760"/>
    </source>
</evidence>
<evidence type="ECO:0000250" key="2">
    <source>
        <dbReference type="UniProtKB" id="P23526"/>
    </source>
</evidence>
<evidence type="ECO:0000250" key="3">
    <source>
        <dbReference type="UniProtKB" id="P50247"/>
    </source>
</evidence>
<evidence type="ECO:0000305" key="4"/>
<accession>P51893</accession>
<accession>Q6GNV1</accession>
<gene>
    <name type="primary">ahcy-a</name>
    <name type="synonym">ahcy</name>
    <name type="synonym">ahcy1</name>
</gene>
<sequence length="433" mass="47747">MSDKLSYKVADISLADWGRKAIEIAENEMPGLMKMREMHSESKPLKGARIAGCLHMTLQTAVLIETLTALGAEVQWSSCNIFSTQDHAAAAIAKTGVPVYAWKGETDEEYIWCIEQTIYFKDGKPLNMILDDGGDLTNLVHSKYPQLLKGIKGISEETTTGVHNLYKMKSSGTLQVPAINVNDSVTKSKFDNLYGCRESLIDGIKRATDVMIAGKVAVVAGYGDVGKGCAQALRAFGARVIITEIDPINALQAAMEGYEVTTMDEASKEGNIFVTTTGCADIVEGRHFENMKDDSIVCNIGHFDIELDVKWLNENAVKKVNIKPQVDRYLLKNGRHIILLAEGRLVNLGCAMGHPSFVMSNSFTNQVMAQIELWTNTDKYPVGVYFLPKKLDEAVAAAHLDKLGVKLTKLTDKQAKYLGLDKEGPFKPDHYRY</sequence>
<keyword id="KW-0186">Copper</keyword>
<keyword id="KW-0963">Cytoplasm</keyword>
<keyword id="KW-0378">Hydrolase</keyword>
<keyword id="KW-0520">NAD</keyword>
<keyword id="KW-0554">One-carbon metabolism</keyword>
<keyword id="KW-1185">Reference proteome</keyword>
<protein>
    <recommendedName>
        <fullName>Adenosylhomocysteinase A</fullName>
        <shortName>AdoHcyase A</shortName>
        <ecNumber evidence="1">3.13.2.1</ecNumber>
    </recommendedName>
    <alternativeName>
        <fullName>S-adenosyl-L-homocysteine hydrolase A</fullName>
    </alternativeName>
</protein>
<dbReference type="EC" id="3.13.2.1" evidence="1"/>
<dbReference type="EMBL" id="L35559">
    <property type="protein sequence ID" value="AAA65963.1"/>
    <property type="molecule type" value="mRNA"/>
</dbReference>
<dbReference type="EMBL" id="BC060432">
    <property type="protein sequence ID" value="AAH60432.1"/>
    <property type="molecule type" value="mRNA"/>
</dbReference>
<dbReference type="EMBL" id="BC073400">
    <property type="protein sequence ID" value="AAH73400.1"/>
    <property type="molecule type" value="mRNA"/>
</dbReference>
<dbReference type="PIR" id="JC2480">
    <property type="entry name" value="JC2480"/>
</dbReference>
<dbReference type="RefSeq" id="NP_001089027.1">
    <property type="nucleotide sequence ID" value="NM_001095558.1"/>
</dbReference>
<dbReference type="SMR" id="P51893"/>
<dbReference type="DNASU" id="503669"/>
<dbReference type="GeneID" id="503669"/>
<dbReference type="KEGG" id="xla:503669"/>
<dbReference type="AGR" id="Xenbase:XB-GENE-6251978"/>
<dbReference type="CTD" id="503669"/>
<dbReference type="Xenbase" id="XB-GENE-6251978">
    <property type="gene designation" value="ahcy.L"/>
</dbReference>
<dbReference type="OMA" id="YIGVTVE"/>
<dbReference type="OrthoDB" id="10007170at2759"/>
<dbReference type="UniPathway" id="UPA00314">
    <property type="reaction ID" value="UER00076"/>
</dbReference>
<dbReference type="Proteomes" id="UP000186698">
    <property type="component" value="Chromosome 9_10L"/>
</dbReference>
<dbReference type="Bgee" id="503669">
    <property type="expression patterns" value="Expressed in pancreas and 19 other cell types or tissues"/>
</dbReference>
<dbReference type="GO" id="GO:0005829">
    <property type="term" value="C:cytosol"/>
    <property type="evidence" value="ECO:0000318"/>
    <property type="project" value="GO_Central"/>
</dbReference>
<dbReference type="GO" id="GO:0004013">
    <property type="term" value="F:adenosylhomocysteinase activity"/>
    <property type="evidence" value="ECO:0000250"/>
    <property type="project" value="UniProtKB"/>
</dbReference>
<dbReference type="GO" id="GO:0051287">
    <property type="term" value="F:NAD binding"/>
    <property type="evidence" value="ECO:0000250"/>
    <property type="project" value="UniProtKB"/>
</dbReference>
<dbReference type="GO" id="GO:0006730">
    <property type="term" value="P:one-carbon metabolic process"/>
    <property type="evidence" value="ECO:0007669"/>
    <property type="project" value="UniProtKB-KW"/>
</dbReference>
<dbReference type="GO" id="GO:0033353">
    <property type="term" value="P:S-adenosylmethionine cycle"/>
    <property type="evidence" value="ECO:0000318"/>
    <property type="project" value="GO_Central"/>
</dbReference>
<dbReference type="CDD" id="cd00401">
    <property type="entry name" value="SAHH"/>
    <property type="match status" value="1"/>
</dbReference>
<dbReference type="FunFam" id="3.40.50.1480:FF:000004">
    <property type="entry name" value="Adenosylhomocysteinase"/>
    <property type="match status" value="1"/>
</dbReference>
<dbReference type="FunFam" id="3.40.50.1480:FF:000007">
    <property type="entry name" value="Adenosylhomocysteinase"/>
    <property type="match status" value="1"/>
</dbReference>
<dbReference type="FunFam" id="3.40.50.720:FF:000004">
    <property type="entry name" value="Adenosylhomocysteinase"/>
    <property type="match status" value="1"/>
</dbReference>
<dbReference type="Gene3D" id="3.40.50.1480">
    <property type="entry name" value="Adenosylhomocysteinase-like"/>
    <property type="match status" value="3"/>
</dbReference>
<dbReference type="Gene3D" id="3.40.50.720">
    <property type="entry name" value="NAD(P)-binding Rossmann-like Domain"/>
    <property type="match status" value="1"/>
</dbReference>
<dbReference type="HAMAP" id="MF_00563">
    <property type="entry name" value="AdoHcyase"/>
    <property type="match status" value="1"/>
</dbReference>
<dbReference type="InterPro" id="IPR042172">
    <property type="entry name" value="Adenosylhomocyst_ase-like_sf"/>
</dbReference>
<dbReference type="InterPro" id="IPR000043">
    <property type="entry name" value="Adenosylhomocysteinase-like"/>
</dbReference>
<dbReference type="InterPro" id="IPR015878">
    <property type="entry name" value="Ado_hCys_hydrolase_NAD-bd"/>
</dbReference>
<dbReference type="InterPro" id="IPR036291">
    <property type="entry name" value="NAD(P)-bd_dom_sf"/>
</dbReference>
<dbReference type="InterPro" id="IPR020082">
    <property type="entry name" value="S-Ado-L-homoCys_hydrolase_CS"/>
</dbReference>
<dbReference type="NCBIfam" id="TIGR00936">
    <property type="entry name" value="ahcY"/>
    <property type="match status" value="1"/>
</dbReference>
<dbReference type="NCBIfam" id="NF004005">
    <property type="entry name" value="PRK05476.2-3"/>
    <property type="match status" value="1"/>
</dbReference>
<dbReference type="PANTHER" id="PTHR23420">
    <property type="entry name" value="ADENOSYLHOMOCYSTEINASE"/>
    <property type="match status" value="1"/>
</dbReference>
<dbReference type="PANTHER" id="PTHR23420:SF0">
    <property type="entry name" value="ADENOSYLHOMOCYSTEINASE"/>
    <property type="match status" value="1"/>
</dbReference>
<dbReference type="Pfam" id="PF05221">
    <property type="entry name" value="AdoHcyase"/>
    <property type="match status" value="1"/>
</dbReference>
<dbReference type="Pfam" id="PF00670">
    <property type="entry name" value="AdoHcyase_NAD"/>
    <property type="match status" value="1"/>
</dbReference>
<dbReference type="PIRSF" id="PIRSF001109">
    <property type="entry name" value="Ad_hcy_hydrolase"/>
    <property type="match status" value="1"/>
</dbReference>
<dbReference type="SMART" id="SM00996">
    <property type="entry name" value="AdoHcyase"/>
    <property type="match status" value="1"/>
</dbReference>
<dbReference type="SMART" id="SM00997">
    <property type="entry name" value="AdoHcyase_NAD"/>
    <property type="match status" value="1"/>
</dbReference>
<dbReference type="SUPFAM" id="SSF52283">
    <property type="entry name" value="Formate/glycerate dehydrogenase catalytic domain-like"/>
    <property type="match status" value="1"/>
</dbReference>
<dbReference type="SUPFAM" id="SSF51735">
    <property type="entry name" value="NAD(P)-binding Rossmann-fold domains"/>
    <property type="match status" value="1"/>
</dbReference>
<dbReference type="PROSITE" id="PS00738">
    <property type="entry name" value="ADOHCYASE_1"/>
    <property type="match status" value="1"/>
</dbReference>
<dbReference type="PROSITE" id="PS00739">
    <property type="entry name" value="ADOHCYASE_2"/>
    <property type="match status" value="1"/>
</dbReference>
<comment type="function">
    <text evidence="1 3">Catalyzes the hydrolysis of S-adenosyl-L-homocysteine to form adenosine and homocysteine (By similarity). Binds copper ions (By similarity).</text>
</comment>
<comment type="catalytic activity">
    <reaction evidence="1">
        <text>S-adenosyl-L-homocysteine + H2O = L-homocysteine + adenosine</text>
        <dbReference type="Rhea" id="RHEA:21708"/>
        <dbReference type="ChEBI" id="CHEBI:15377"/>
        <dbReference type="ChEBI" id="CHEBI:16335"/>
        <dbReference type="ChEBI" id="CHEBI:57856"/>
        <dbReference type="ChEBI" id="CHEBI:58199"/>
        <dbReference type="EC" id="3.13.2.1"/>
    </reaction>
    <physiologicalReaction direction="left-to-right" evidence="1">
        <dbReference type="Rhea" id="RHEA:21709"/>
    </physiologicalReaction>
</comment>
<comment type="cofactor">
    <cofactor evidence="1">
        <name>NAD(+)</name>
        <dbReference type="ChEBI" id="CHEBI:57540"/>
    </cofactor>
    <text evidence="1">Binds 1 NAD(+) per subunit.</text>
</comment>
<comment type="pathway">
    <text>Amino-acid biosynthesis; L-homocysteine biosynthesis; L-homocysteine from S-adenosyl-L-homocysteine: step 1/1.</text>
</comment>
<comment type="subunit">
    <text evidence="1">Homotetramer.</text>
</comment>
<comment type="subcellular location">
    <subcellularLocation>
        <location evidence="2">Cytoplasm</location>
    </subcellularLocation>
</comment>
<comment type="similarity">
    <text evidence="4">Belongs to the adenosylhomocysteinase family.</text>
</comment>
<proteinExistence type="evidence at transcript level"/>
<organism>
    <name type="scientific">Xenopus laevis</name>
    <name type="common">African clawed frog</name>
    <dbReference type="NCBI Taxonomy" id="8355"/>
    <lineage>
        <taxon>Eukaryota</taxon>
        <taxon>Metazoa</taxon>
        <taxon>Chordata</taxon>
        <taxon>Craniata</taxon>
        <taxon>Vertebrata</taxon>
        <taxon>Euteleostomi</taxon>
        <taxon>Amphibia</taxon>
        <taxon>Batrachia</taxon>
        <taxon>Anura</taxon>
        <taxon>Pipoidea</taxon>
        <taxon>Pipidae</taxon>
        <taxon>Xenopodinae</taxon>
        <taxon>Xenopus</taxon>
        <taxon>Xenopus</taxon>
    </lineage>
</organism>